<keyword id="KW-0456">Lyase</keyword>
<proteinExistence type="inferred from homology"/>
<comment type="function">
    <text evidence="1">Catalyzes the formation of methylglyoxal from dihydroxyacetone phosphate.</text>
</comment>
<comment type="catalytic activity">
    <reaction evidence="1">
        <text>dihydroxyacetone phosphate = methylglyoxal + phosphate</text>
        <dbReference type="Rhea" id="RHEA:17937"/>
        <dbReference type="ChEBI" id="CHEBI:17158"/>
        <dbReference type="ChEBI" id="CHEBI:43474"/>
        <dbReference type="ChEBI" id="CHEBI:57642"/>
        <dbReference type="EC" id="4.2.3.3"/>
    </reaction>
</comment>
<comment type="similarity">
    <text evidence="1">Belongs to the methylglyoxal synthase family.</text>
</comment>
<comment type="sequence caution" evidence="2">
    <conflict type="erroneous initiation">
        <sequence resource="EMBL-CDS" id="AAU37446"/>
    </conflict>
</comment>
<feature type="chain" id="PRO_0000178637" description="Methylglyoxal synthase">
    <location>
        <begin position="1"/>
        <end position="152"/>
    </location>
</feature>
<feature type="domain" description="MGS-like" evidence="1">
    <location>
        <begin position="6"/>
        <end position="152"/>
    </location>
</feature>
<feature type="active site" description="Proton donor/acceptor" evidence="1">
    <location>
        <position position="71"/>
    </location>
</feature>
<feature type="binding site" evidence="1">
    <location>
        <position position="19"/>
    </location>
    <ligand>
        <name>substrate</name>
    </ligand>
</feature>
<feature type="binding site" evidence="1">
    <location>
        <position position="23"/>
    </location>
    <ligand>
        <name>substrate</name>
    </ligand>
</feature>
<feature type="binding site" evidence="1">
    <location>
        <begin position="45"/>
        <end position="48"/>
    </location>
    <ligand>
        <name>substrate</name>
    </ligand>
</feature>
<feature type="binding site" evidence="1">
    <location>
        <begin position="65"/>
        <end position="66"/>
    </location>
    <ligand>
        <name>substrate</name>
    </ligand>
</feature>
<feature type="binding site" evidence="1">
    <location>
        <position position="98"/>
    </location>
    <ligand>
        <name>substrate</name>
    </ligand>
</feature>
<accession>Q65UB4</accession>
<reference key="1">
    <citation type="journal article" date="2004" name="Nat. Biotechnol.">
        <title>The genome sequence of the capnophilic rumen bacterium Mannheimia succiniciproducens.</title>
        <authorList>
            <person name="Hong S.H."/>
            <person name="Kim J.S."/>
            <person name="Lee S.Y."/>
            <person name="In Y.H."/>
            <person name="Choi S.S."/>
            <person name="Rih J.-K."/>
            <person name="Kim C.H."/>
            <person name="Jeong H."/>
            <person name="Hur C.G."/>
            <person name="Kim J.J."/>
        </authorList>
    </citation>
    <scope>NUCLEOTIDE SEQUENCE [LARGE SCALE GENOMIC DNA]</scope>
    <source>
        <strain>KCTC 0769BP / MBEL55E</strain>
    </source>
</reference>
<protein>
    <recommendedName>
        <fullName evidence="1">Methylglyoxal synthase</fullName>
        <shortName evidence="1">MGS</shortName>
        <ecNumber evidence="1">4.2.3.3</ecNumber>
    </recommendedName>
</protein>
<dbReference type="EC" id="4.2.3.3" evidence="1"/>
<dbReference type="EMBL" id="AE016827">
    <property type="protein sequence ID" value="AAU37446.1"/>
    <property type="status" value="ALT_INIT"/>
    <property type="molecule type" value="Genomic_DNA"/>
</dbReference>
<dbReference type="RefSeq" id="WP_011200018.1">
    <property type="nucleotide sequence ID" value="NC_006300.1"/>
</dbReference>
<dbReference type="SMR" id="Q65UB4"/>
<dbReference type="STRING" id="221988.MS0839"/>
<dbReference type="KEGG" id="msu:MS0839"/>
<dbReference type="eggNOG" id="COG1803">
    <property type="taxonomic scope" value="Bacteria"/>
</dbReference>
<dbReference type="HOGENOM" id="CLU_120420_0_1_6"/>
<dbReference type="OrthoDB" id="9787147at2"/>
<dbReference type="Proteomes" id="UP000000607">
    <property type="component" value="Chromosome"/>
</dbReference>
<dbReference type="GO" id="GO:0005829">
    <property type="term" value="C:cytosol"/>
    <property type="evidence" value="ECO:0007669"/>
    <property type="project" value="TreeGrafter"/>
</dbReference>
<dbReference type="GO" id="GO:0008929">
    <property type="term" value="F:methylglyoxal synthase activity"/>
    <property type="evidence" value="ECO:0007669"/>
    <property type="project" value="UniProtKB-UniRule"/>
</dbReference>
<dbReference type="GO" id="GO:0019242">
    <property type="term" value="P:methylglyoxal biosynthetic process"/>
    <property type="evidence" value="ECO:0007669"/>
    <property type="project" value="UniProtKB-UniRule"/>
</dbReference>
<dbReference type="CDD" id="cd01422">
    <property type="entry name" value="MGS"/>
    <property type="match status" value="1"/>
</dbReference>
<dbReference type="FunFam" id="3.40.50.1380:FF:000002">
    <property type="entry name" value="Methylglyoxal synthase"/>
    <property type="match status" value="1"/>
</dbReference>
<dbReference type="Gene3D" id="3.40.50.1380">
    <property type="entry name" value="Methylglyoxal synthase-like domain"/>
    <property type="match status" value="1"/>
</dbReference>
<dbReference type="HAMAP" id="MF_00549">
    <property type="entry name" value="Methylglyoxal_synth"/>
    <property type="match status" value="1"/>
</dbReference>
<dbReference type="InterPro" id="IPR004363">
    <property type="entry name" value="Methylgl_synth"/>
</dbReference>
<dbReference type="InterPro" id="IPR018148">
    <property type="entry name" value="Methylglyoxal_synth_AS"/>
</dbReference>
<dbReference type="InterPro" id="IPR011607">
    <property type="entry name" value="MGS-like_dom"/>
</dbReference>
<dbReference type="InterPro" id="IPR036914">
    <property type="entry name" value="MGS-like_dom_sf"/>
</dbReference>
<dbReference type="NCBIfam" id="TIGR00160">
    <property type="entry name" value="MGSA"/>
    <property type="match status" value="1"/>
</dbReference>
<dbReference type="NCBIfam" id="NF003559">
    <property type="entry name" value="PRK05234.1"/>
    <property type="match status" value="1"/>
</dbReference>
<dbReference type="PANTHER" id="PTHR30492">
    <property type="entry name" value="METHYLGLYOXAL SYNTHASE"/>
    <property type="match status" value="1"/>
</dbReference>
<dbReference type="PANTHER" id="PTHR30492:SF0">
    <property type="entry name" value="METHYLGLYOXAL SYNTHASE"/>
    <property type="match status" value="1"/>
</dbReference>
<dbReference type="Pfam" id="PF02142">
    <property type="entry name" value="MGS"/>
    <property type="match status" value="1"/>
</dbReference>
<dbReference type="PIRSF" id="PIRSF006614">
    <property type="entry name" value="Methylglyox_syn"/>
    <property type="match status" value="1"/>
</dbReference>
<dbReference type="SMART" id="SM00851">
    <property type="entry name" value="MGS"/>
    <property type="match status" value="1"/>
</dbReference>
<dbReference type="SUPFAM" id="SSF52335">
    <property type="entry name" value="Methylglyoxal synthase-like"/>
    <property type="match status" value="1"/>
</dbReference>
<dbReference type="PROSITE" id="PS01335">
    <property type="entry name" value="METHYLGLYOXAL_SYNTH"/>
    <property type="match status" value="1"/>
</dbReference>
<dbReference type="PROSITE" id="PS51855">
    <property type="entry name" value="MGS"/>
    <property type="match status" value="1"/>
</dbReference>
<evidence type="ECO:0000255" key="1">
    <source>
        <dbReference type="HAMAP-Rule" id="MF_00549"/>
    </source>
</evidence>
<evidence type="ECO:0000305" key="2"/>
<sequence>METTFRHVAAQKHIALVAHDHCKEDLINWCQKNVHHLQNHQLYATGTTGHLIEKATELKINSLLSGPMGGDQQLGALIAENKIDVMIFFWDPMNAVPHDPDVKALLRIAAVWNIPHAMNIASADLLINSPLINREIELRIPDYQTYLQKRLK</sequence>
<gene>
    <name evidence="1" type="primary">mgsA</name>
    <name type="ordered locus">MS0839</name>
</gene>
<name>MGSA_MANSM</name>
<organism>
    <name type="scientific">Mannheimia succiniciproducens (strain KCTC 0769BP / MBEL55E)</name>
    <dbReference type="NCBI Taxonomy" id="221988"/>
    <lineage>
        <taxon>Bacteria</taxon>
        <taxon>Pseudomonadati</taxon>
        <taxon>Pseudomonadota</taxon>
        <taxon>Gammaproteobacteria</taxon>
        <taxon>Pasteurellales</taxon>
        <taxon>Pasteurellaceae</taxon>
        <taxon>Basfia</taxon>
    </lineage>
</organism>